<dbReference type="EC" id="2.7.11.25"/>
<dbReference type="EMBL" id="AF155142">
    <property type="protein sequence ID" value="AAF73281.1"/>
    <property type="molecule type" value="Genomic_DNA"/>
</dbReference>
<dbReference type="EMBL" id="BC030928">
    <property type="protein sequence ID" value="AAH30928.1"/>
    <property type="molecule type" value="mRNA"/>
</dbReference>
<dbReference type="EMBL" id="BC047152">
    <property type="protein sequence ID" value="AAH47152.1"/>
    <property type="molecule type" value="mRNA"/>
</dbReference>
<dbReference type="EMBL" id="BC095963">
    <property type="protein sequence ID" value="AAH95963.1"/>
    <property type="molecule type" value="mRNA"/>
</dbReference>
<dbReference type="CCDS" id="CCDS29476.1"/>
<dbReference type="RefSeq" id="NP_001405272.1">
    <property type="nucleotide sequence ID" value="NM_001418343.1"/>
</dbReference>
<dbReference type="RefSeq" id="NP_001405273.1">
    <property type="nucleotide sequence ID" value="NM_001418344.1"/>
</dbReference>
<dbReference type="RefSeq" id="NP_071295.2">
    <property type="nucleotide sequence ID" value="NM_022012.3"/>
</dbReference>
<dbReference type="RefSeq" id="XP_006531815.1">
    <property type="nucleotide sequence ID" value="XM_006531752.2"/>
</dbReference>
<dbReference type="RefSeq" id="XP_030106811.1">
    <property type="nucleotide sequence ID" value="XM_030250951.2"/>
</dbReference>
<dbReference type="RefSeq" id="XP_030106812.1">
    <property type="nucleotide sequence ID" value="XM_030250952.1"/>
</dbReference>
<dbReference type="RefSeq" id="XP_036017492.1">
    <property type="nucleotide sequence ID" value="XM_036161599.1"/>
</dbReference>
<dbReference type="SMR" id="Q80XI6"/>
<dbReference type="BioGRID" id="204956">
    <property type="interactions" value="3"/>
</dbReference>
<dbReference type="CORUM" id="Q80XI6"/>
<dbReference type="FunCoup" id="Q80XI6">
    <property type="interactions" value="563"/>
</dbReference>
<dbReference type="IntAct" id="Q80XI6">
    <property type="interactions" value="2"/>
</dbReference>
<dbReference type="STRING" id="10090.ENSMUSP00000004156"/>
<dbReference type="BindingDB" id="Q80XI6"/>
<dbReference type="ChEMBL" id="CHEMBL2434817"/>
<dbReference type="GlyGen" id="Q80XI6">
    <property type="glycosylation" value="4 sites"/>
</dbReference>
<dbReference type="iPTMnet" id="Q80XI6"/>
<dbReference type="PhosphoSitePlus" id="Q80XI6"/>
<dbReference type="jPOST" id="Q80XI6"/>
<dbReference type="PaxDb" id="10090-ENSMUSP00000004156"/>
<dbReference type="PeptideAtlas" id="Q80XI6"/>
<dbReference type="ProteomicsDB" id="292135"/>
<dbReference type="Antibodypedia" id="29871">
    <property type="antibodies" value="316 antibodies from 34 providers"/>
</dbReference>
<dbReference type="DNASU" id="26403"/>
<dbReference type="Ensembl" id="ENSMUST00000004156.10">
    <property type="protein sequence ID" value="ENSMUSP00000004156.9"/>
    <property type="gene ID" value="ENSMUSG00000004054.10"/>
</dbReference>
<dbReference type="GeneID" id="26403"/>
<dbReference type="KEGG" id="mmu:26403"/>
<dbReference type="UCSC" id="uc008get.1">
    <property type="organism name" value="mouse"/>
</dbReference>
<dbReference type="AGR" id="MGI:1346880"/>
<dbReference type="CTD" id="4296"/>
<dbReference type="MGI" id="MGI:1346880">
    <property type="gene designation" value="Map3k11"/>
</dbReference>
<dbReference type="VEuPathDB" id="HostDB:ENSMUSG00000004054"/>
<dbReference type="eggNOG" id="KOG0192">
    <property type="taxonomic scope" value="Eukaryota"/>
</dbReference>
<dbReference type="GeneTree" id="ENSGT00940000161064"/>
<dbReference type="HOGENOM" id="CLU_000288_7_14_1"/>
<dbReference type="InParanoid" id="Q80XI6"/>
<dbReference type="OMA" id="HLSPKMP"/>
<dbReference type="OrthoDB" id="339325at2759"/>
<dbReference type="PhylomeDB" id="Q80XI6"/>
<dbReference type="TreeFam" id="TF105118"/>
<dbReference type="Reactome" id="R-MMU-5673000">
    <property type="pathway name" value="RAF activation"/>
</dbReference>
<dbReference type="Reactome" id="R-MMU-9013408">
    <property type="pathway name" value="RHOG GTPase cycle"/>
</dbReference>
<dbReference type="Reactome" id="R-MMU-9013424">
    <property type="pathway name" value="RHOV GTPase cycle"/>
</dbReference>
<dbReference type="BioGRID-ORCS" id="26403">
    <property type="hits" value="3 hits in 80 CRISPR screens"/>
</dbReference>
<dbReference type="ChiTaRS" id="Map3k11">
    <property type="organism name" value="mouse"/>
</dbReference>
<dbReference type="PRO" id="PR:Q80XI6"/>
<dbReference type="Proteomes" id="UP000000589">
    <property type="component" value="Chromosome 19"/>
</dbReference>
<dbReference type="RNAct" id="Q80XI6">
    <property type="molecule type" value="protein"/>
</dbReference>
<dbReference type="Bgee" id="ENSMUSG00000004054">
    <property type="expression patterns" value="Expressed in granulocyte and 214 other cell types or tissues"/>
</dbReference>
<dbReference type="ExpressionAtlas" id="Q80XI6">
    <property type="expression patterns" value="baseline and differential"/>
</dbReference>
<dbReference type="GO" id="GO:0005813">
    <property type="term" value="C:centrosome"/>
    <property type="evidence" value="ECO:0007669"/>
    <property type="project" value="UniProtKB-SubCell"/>
</dbReference>
<dbReference type="GO" id="GO:0005737">
    <property type="term" value="C:cytoplasm"/>
    <property type="evidence" value="ECO:0007669"/>
    <property type="project" value="UniProtKB-KW"/>
</dbReference>
<dbReference type="GO" id="GO:0005874">
    <property type="term" value="C:microtubule"/>
    <property type="evidence" value="ECO:0007669"/>
    <property type="project" value="Ensembl"/>
</dbReference>
<dbReference type="GO" id="GO:0005524">
    <property type="term" value="F:ATP binding"/>
    <property type="evidence" value="ECO:0007669"/>
    <property type="project" value="UniProtKB-KW"/>
</dbReference>
<dbReference type="GO" id="GO:0004706">
    <property type="term" value="F:JUN kinase kinase kinase activity"/>
    <property type="evidence" value="ECO:0007669"/>
    <property type="project" value="Ensembl"/>
</dbReference>
<dbReference type="GO" id="GO:0031434">
    <property type="term" value="F:mitogen-activated protein kinase kinase binding"/>
    <property type="evidence" value="ECO:0007669"/>
    <property type="project" value="Ensembl"/>
</dbReference>
<dbReference type="GO" id="GO:0031435">
    <property type="term" value="F:mitogen-activated protein kinase kinase kinase binding"/>
    <property type="evidence" value="ECO:0007669"/>
    <property type="project" value="Ensembl"/>
</dbReference>
<dbReference type="GO" id="GO:0042803">
    <property type="term" value="F:protein homodimerization activity"/>
    <property type="evidence" value="ECO:0007669"/>
    <property type="project" value="Ensembl"/>
</dbReference>
<dbReference type="GO" id="GO:0106310">
    <property type="term" value="F:protein serine kinase activity"/>
    <property type="evidence" value="ECO:0007669"/>
    <property type="project" value="RHEA"/>
</dbReference>
<dbReference type="GO" id="GO:0031267">
    <property type="term" value="F:small GTPase binding"/>
    <property type="evidence" value="ECO:0007669"/>
    <property type="project" value="Ensembl"/>
</dbReference>
<dbReference type="GO" id="GO:0044843">
    <property type="term" value="P:cell cycle G1/S phase transition"/>
    <property type="evidence" value="ECO:0007669"/>
    <property type="project" value="Ensembl"/>
</dbReference>
<dbReference type="GO" id="GO:0007254">
    <property type="term" value="P:JNK cascade"/>
    <property type="evidence" value="ECO:0007669"/>
    <property type="project" value="Ensembl"/>
</dbReference>
<dbReference type="GO" id="GO:0007017">
    <property type="term" value="P:microtubule-based process"/>
    <property type="evidence" value="ECO:0007669"/>
    <property type="project" value="Ensembl"/>
</dbReference>
<dbReference type="GO" id="GO:0046330">
    <property type="term" value="P:positive regulation of JNK cascade"/>
    <property type="evidence" value="ECO:0007669"/>
    <property type="project" value="Ensembl"/>
</dbReference>
<dbReference type="GO" id="GO:0043525">
    <property type="term" value="P:positive regulation of neuron apoptotic process"/>
    <property type="evidence" value="ECO:0007669"/>
    <property type="project" value="Ensembl"/>
</dbReference>
<dbReference type="CDD" id="cd12059">
    <property type="entry name" value="SH3_MLK1-3"/>
    <property type="match status" value="1"/>
</dbReference>
<dbReference type="CDD" id="cd14147">
    <property type="entry name" value="STKc_MLK3"/>
    <property type="match status" value="1"/>
</dbReference>
<dbReference type="FunFam" id="1.10.510.10:FF:000076">
    <property type="entry name" value="Mitogen-activated protein kinase kinase kinase"/>
    <property type="match status" value="1"/>
</dbReference>
<dbReference type="FunFam" id="2.30.30.40:FF:000079">
    <property type="entry name" value="Mitogen-activated protein kinase kinase kinase"/>
    <property type="match status" value="1"/>
</dbReference>
<dbReference type="FunFam" id="3.30.200.20:FF:000085">
    <property type="entry name" value="Mitogen-activated protein kinase kinase kinase"/>
    <property type="match status" value="1"/>
</dbReference>
<dbReference type="Gene3D" id="3.30.200.20">
    <property type="entry name" value="Phosphorylase Kinase, domain 1"/>
    <property type="match status" value="1"/>
</dbReference>
<dbReference type="Gene3D" id="2.30.30.40">
    <property type="entry name" value="SH3 Domains"/>
    <property type="match status" value="1"/>
</dbReference>
<dbReference type="Gene3D" id="1.10.510.10">
    <property type="entry name" value="Transferase(Phosphotransferase) domain 1"/>
    <property type="match status" value="1"/>
</dbReference>
<dbReference type="InterPro" id="IPR011009">
    <property type="entry name" value="Kinase-like_dom_sf"/>
</dbReference>
<dbReference type="InterPro" id="IPR035779">
    <property type="entry name" value="MLK1-3_SH3"/>
</dbReference>
<dbReference type="InterPro" id="IPR016231">
    <property type="entry name" value="MLK1-4"/>
</dbReference>
<dbReference type="InterPro" id="IPR000719">
    <property type="entry name" value="Prot_kinase_dom"/>
</dbReference>
<dbReference type="InterPro" id="IPR017441">
    <property type="entry name" value="Protein_kinase_ATP_BS"/>
</dbReference>
<dbReference type="InterPro" id="IPR001245">
    <property type="entry name" value="Ser-Thr/Tyr_kinase_cat_dom"/>
</dbReference>
<dbReference type="InterPro" id="IPR008271">
    <property type="entry name" value="Ser/Thr_kinase_AS"/>
</dbReference>
<dbReference type="InterPro" id="IPR051681">
    <property type="entry name" value="Ser/Thr_Kinases-Pseudokinases"/>
</dbReference>
<dbReference type="InterPro" id="IPR036028">
    <property type="entry name" value="SH3-like_dom_sf"/>
</dbReference>
<dbReference type="InterPro" id="IPR001452">
    <property type="entry name" value="SH3_domain"/>
</dbReference>
<dbReference type="PANTHER" id="PTHR44329:SF46">
    <property type="entry name" value="MITOGEN-ACTIVATED PROTEIN KINASE KINASE KINASE 11"/>
    <property type="match status" value="1"/>
</dbReference>
<dbReference type="PANTHER" id="PTHR44329">
    <property type="entry name" value="SERINE/THREONINE-PROTEIN KINASE TNNI3K-RELATED"/>
    <property type="match status" value="1"/>
</dbReference>
<dbReference type="Pfam" id="PF07714">
    <property type="entry name" value="PK_Tyr_Ser-Thr"/>
    <property type="match status" value="1"/>
</dbReference>
<dbReference type="Pfam" id="PF14604">
    <property type="entry name" value="SH3_9"/>
    <property type="match status" value="1"/>
</dbReference>
<dbReference type="PIRSF" id="PIRSF000556">
    <property type="entry name" value="MAPKKK9_11"/>
    <property type="match status" value="1"/>
</dbReference>
<dbReference type="PRINTS" id="PR00452">
    <property type="entry name" value="SH3DOMAIN"/>
</dbReference>
<dbReference type="PRINTS" id="PR00109">
    <property type="entry name" value="TYRKINASE"/>
</dbReference>
<dbReference type="SMART" id="SM00220">
    <property type="entry name" value="S_TKc"/>
    <property type="match status" value="1"/>
</dbReference>
<dbReference type="SMART" id="SM00326">
    <property type="entry name" value="SH3"/>
    <property type="match status" value="1"/>
</dbReference>
<dbReference type="SUPFAM" id="SSF56112">
    <property type="entry name" value="Protein kinase-like (PK-like)"/>
    <property type="match status" value="1"/>
</dbReference>
<dbReference type="SUPFAM" id="SSF50044">
    <property type="entry name" value="SH3-domain"/>
    <property type="match status" value="1"/>
</dbReference>
<dbReference type="PROSITE" id="PS00107">
    <property type="entry name" value="PROTEIN_KINASE_ATP"/>
    <property type="match status" value="1"/>
</dbReference>
<dbReference type="PROSITE" id="PS50011">
    <property type="entry name" value="PROTEIN_KINASE_DOM"/>
    <property type="match status" value="1"/>
</dbReference>
<dbReference type="PROSITE" id="PS00108">
    <property type="entry name" value="PROTEIN_KINASE_ST"/>
    <property type="match status" value="1"/>
</dbReference>
<dbReference type="PROSITE" id="PS50002">
    <property type="entry name" value="SH3"/>
    <property type="match status" value="1"/>
</dbReference>
<sequence length="850" mass="93226">MEPLKNLFLKSPLGSWNGSGSGGGGGTGGVRPEGSPKATAAYANPVWTALFDYEPNGQDELALRKGDRVEVLSRDAAISGDEGWWAGQVGGQVGIFPSNYVSRGGGPPPCEVASFQELRLEEVIGIGGFGKVYRGSWRGELVAVKAARQDPDEDISVTAESVRQEARLFAMLAHPNIIALKAVCLEEPNLCLVMEYAAGGPLSRALAGRRVPPHVLVNWAVQIARGMHYLHCEALVPVIHRDLKSNNILLLQPIEGDDMEHKTLKITDFGLAREWHKTTQMSAAGTYAWMAPEVIKASTFSKGSDVWSFGVLLWELLTGEVPYRGIDCLAVAYGVAVNKLTLPIPSTCPEPFAQLMADCWAQDPHRRPDFASILQQLEALEAQVLREMPRDSFHSMQEGWKREIQGLFDELRAKEKELLSREEELTRAAREQRSQAEQLRRREHLLAQWELEVFERELTLLLQQVDRERPHVRRRRGTFKRSKLRARDGGERISMPLDFKHRITVQASPGLDRRRNVFEVGAGDSPTFPRFRAIQLEPTESGQTWGRQSPRRLEDSSNGERRACWAWGPSSPKPGEAQNGRRRSRMDEATWYLDSDDSSPLGSPSTPPALNGNPPRPSPEPEEPRRAGPTERGNSSGTPKLIQRALLRGTALLASLGLGRDLQPPGGLSRERGESPTAPPPAQMPSPCPPELPSTPLIRLSQTTPDAHSSPTPGPLLLDLGVPSGQPSAKSPRREETRGRTVSPPPGISRSAPGTPGTPRSPPLGLISRPRPSPLRSRIDPWSFVSAGPRPSPLPSPQPAPRRAPWTLFPDSDPFWDSPPANPFRGGSQDCRTQTKDMGAQAPWAPEAGP</sequence>
<gene>
    <name type="primary">Map3k11</name>
    <name type="synonym">Mlk3</name>
</gene>
<keyword id="KW-0067">ATP-binding</keyword>
<keyword id="KW-0963">Cytoplasm</keyword>
<keyword id="KW-0206">Cytoskeleton</keyword>
<keyword id="KW-0418">Kinase</keyword>
<keyword id="KW-0547">Nucleotide-binding</keyword>
<keyword id="KW-0597">Phosphoprotein</keyword>
<keyword id="KW-1185">Reference proteome</keyword>
<keyword id="KW-0677">Repeat</keyword>
<keyword id="KW-0723">Serine/threonine-protein kinase</keyword>
<keyword id="KW-0728">SH3 domain</keyword>
<keyword id="KW-0808">Transferase</keyword>
<organism>
    <name type="scientific">Mus musculus</name>
    <name type="common">Mouse</name>
    <dbReference type="NCBI Taxonomy" id="10090"/>
    <lineage>
        <taxon>Eukaryota</taxon>
        <taxon>Metazoa</taxon>
        <taxon>Chordata</taxon>
        <taxon>Craniata</taxon>
        <taxon>Vertebrata</taxon>
        <taxon>Euteleostomi</taxon>
        <taxon>Mammalia</taxon>
        <taxon>Eutheria</taxon>
        <taxon>Euarchontoglires</taxon>
        <taxon>Glires</taxon>
        <taxon>Rodentia</taxon>
        <taxon>Myomorpha</taxon>
        <taxon>Muroidea</taxon>
        <taxon>Muridae</taxon>
        <taxon>Murinae</taxon>
        <taxon>Mus</taxon>
        <taxon>Mus</taxon>
    </lineage>
</organism>
<feature type="chain" id="PRO_0000277828" description="Mitogen-activated protein kinase kinase kinase 11">
    <location>
        <begin position="1"/>
        <end position="850"/>
    </location>
</feature>
<feature type="domain" description="SH3" evidence="5">
    <location>
        <begin position="42"/>
        <end position="106"/>
    </location>
</feature>
<feature type="domain" description="Protein kinase" evidence="4">
    <location>
        <begin position="118"/>
        <end position="380"/>
    </location>
</feature>
<feature type="region of interest" description="Disordered" evidence="7">
    <location>
        <begin position="16"/>
        <end position="35"/>
    </location>
</feature>
<feature type="region of interest" description="Leucine-zipper 1">
    <location>
        <begin position="404"/>
        <end position="425"/>
    </location>
</feature>
<feature type="region of interest" description="Leucine-zipper 2">
    <location>
        <begin position="439"/>
        <end position="460"/>
    </location>
</feature>
<feature type="region of interest" description="Disordered" evidence="7">
    <location>
        <begin position="535"/>
        <end position="644"/>
    </location>
</feature>
<feature type="region of interest" description="Disordered" evidence="7">
    <location>
        <begin position="657"/>
        <end position="850"/>
    </location>
</feature>
<feature type="compositionally biased region" description="Gly residues" evidence="7">
    <location>
        <begin position="17"/>
        <end position="31"/>
    </location>
</feature>
<feature type="compositionally biased region" description="Polar residues" evidence="7">
    <location>
        <begin position="538"/>
        <end position="547"/>
    </location>
</feature>
<feature type="compositionally biased region" description="Basic and acidic residues" evidence="7">
    <location>
        <begin position="551"/>
        <end position="563"/>
    </location>
</feature>
<feature type="compositionally biased region" description="Low complexity" evidence="7">
    <location>
        <begin position="598"/>
        <end position="610"/>
    </location>
</feature>
<feature type="compositionally biased region" description="Pro residues" evidence="7">
    <location>
        <begin position="677"/>
        <end position="693"/>
    </location>
</feature>
<feature type="compositionally biased region" description="Polar residues" evidence="7">
    <location>
        <begin position="700"/>
        <end position="711"/>
    </location>
</feature>
<feature type="compositionally biased region" description="Low complexity" evidence="7">
    <location>
        <begin position="763"/>
        <end position="776"/>
    </location>
</feature>
<feature type="compositionally biased region" description="Pro residues" evidence="7">
    <location>
        <begin position="790"/>
        <end position="802"/>
    </location>
</feature>
<feature type="compositionally biased region" description="Low complexity" evidence="7">
    <location>
        <begin position="803"/>
        <end position="819"/>
    </location>
</feature>
<feature type="active site" description="Proton acceptor" evidence="4 6">
    <location>
        <position position="242"/>
    </location>
</feature>
<feature type="binding site" evidence="4">
    <location>
        <begin position="124"/>
        <end position="132"/>
    </location>
    <ligand>
        <name>ATP</name>
        <dbReference type="ChEBI" id="CHEBI:30616"/>
    </ligand>
</feature>
<feature type="binding site" evidence="4">
    <location>
        <position position="145"/>
    </location>
    <ligand>
        <name>ATP</name>
        <dbReference type="ChEBI" id="CHEBI:30616"/>
    </ligand>
</feature>
<feature type="modified residue" description="Phosphoserine" evidence="2">
    <location>
        <position position="11"/>
    </location>
</feature>
<feature type="modified residue" description="Phosphoserine" evidence="11">
    <location>
        <position position="35"/>
    </location>
</feature>
<feature type="modified residue" description="Phosphothreonine; by autocatalysis" evidence="2">
    <location>
        <position position="278"/>
    </location>
</feature>
<feature type="modified residue" description="Phosphoserine; by autocatalysis and MAP4K1" evidence="2">
    <location>
        <position position="282"/>
    </location>
</feature>
<feature type="modified residue" description="Phosphoserine" evidence="2">
    <location>
        <position position="395"/>
    </location>
</feature>
<feature type="modified residue" description="Phosphoserine" evidence="2">
    <location>
        <position position="508"/>
    </location>
</feature>
<feature type="modified residue" description="Phosphoserine" evidence="2">
    <location>
        <position position="525"/>
    </location>
</feature>
<feature type="modified residue" description="Phosphoserine" evidence="2">
    <location>
        <position position="549"/>
    </location>
</feature>
<feature type="modified residue" description="Phosphoserine" evidence="2">
    <location>
        <position position="556"/>
    </location>
</feature>
<feature type="modified residue" description="Phosphoserine" evidence="2">
    <location>
        <position position="557"/>
    </location>
</feature>
<feature type="modified residue" description="Phosphoserine" evidence="2">
    <location>
        <position position="655"/>
    </location>
</feature>
<feature type="modified residue" description="Phosphoserine" evidence="2">
    <location>
        <position position="709"/>
    </location>
</feature>
<feature type="modified residue" description="Phosphothreonine" evidence="2">
    <location>
        <position position="712"/>
    </location>
</feature>
<feature type="modified residue" description="Phosphoserine" evidence="2">
    <location>
        <position position="728"/>
    </location>
</feature>
<feature type="modified residue" description="Phosphoserine" evidence="2">
    <location>
        <position position="731"/>
    </location>
</feature>
<feature type="modified residue" description="Phosphoserine" evidence="10">
    <location>
        <position position="743"/>
    </location>
</feature>
<feature type="modified residue" description="Phosphoserine" evidence="2">
    <location>
        <position position="751"/>
    </location>
</feature>
<feature type="modified residue" description="Phosphoserine" evidence="2">
    <location>
        <position position="761"/>
    </location>
</feature>
<feature type="modified residue" description="Phosphoserine" evidence="2">
    <location>
        <position position="773"/>
    </location>
</feature>
<feature type="modified residue" description="Phosphoserine" evidence="11">
    <location>
        <position position="792"/>
    </location>
</feature>
<feature type="modified residue" description="Phosphoserine" evidence="11">
    <location>
        <position position="796"/>
    </location>
</feature>
<feature type="modified residue" description="Phosphoserine" evidence="2">
    <location>
        <position position="818"/>
    </location>
</feature>
<feature type="sequence conflict" description="In Ref. 1; AAF73281." evidence="9" ref="1">
    <original>EL</original>
    <variation>DV</variation>
    <location>
        <begin position="457"/>
        <end position="458"/>
    </location>
</feature>
<feature type="sequence conflict" description="In Ref. 1; AAF73281." evidence="9" ref="1">
    <original>AQ</original>
    <variation>CP</variation>
    <location>
        <begin position="840"/>
        <end position="841"/>
    </location>
</feature>
<reference key="1">
    <citation type="journal article" date="2000" name="Cytogenet. Cell Genet.">
        <title>Genomic sequencing reveals the structure of the Kcnk6 and map3k11 genes and their close vicinity to the sipa1 gene on mouse chromosome 19.</title>
        <authorList>
            <person name="Saridaki A."/>
            <person name="Ferraz C."/>
            <person name="Demaille J."/>
            <person name="Scherer G."/>
            <person name="Roux A.-F."/>
        </authorList>
    </citation>
    <scope>NUCLEOTIDE SEQUENCE [GENOMIC DNA]</scope>
    <source>
        <strain>129/Ola</strain>
    </source>
</reference>
<reference key="2">
    <citation type="journal article" date="2004" name="Genome Res.">
        <title>The status, quality, and expansion of the NIH full-length cDNA project: the Mammalian Gene Collection (MGC).</title>
        <authorList>
            <consortium name="The MGC Project Team"/>
        </authorList>
    </citation>
    <scope>NUCLEOTIDE SEQUENCE [LARGE SCALE MRNA]</scope>
    <source>
        <strain>FVB/N</strain>
        <tissue>Colon</tissue>
        <tissue>Eye</tissue>
        <tissue>Salivary gland</tissue>
    </source>
</reference>
<reference key="3">
    <citation type="journal article" date="2009" name="Immunity">
        <title>The phagosomal proteome in interferon-gamma-activated macrophages.</title>
        <authorList>
            <person name="Trost M."/>
            <person name="English L."/>
            <person name="Lemieux S."/>
            <person name="Courcelles M."/>
            <person name="Desjardins M."/>
            <person name="Thibault P."/>
        </authorList>
    </citation>
    <scope>PHOSPHORYLATION [LARGE SCALE ANALYSIS] AT SER-743</scope>
    <scope>IDENTIFICATION BY MASS SPECTROMETRY [LARGE SCALE ANALYSIS]</scope>
</reference>
<reference key="4">
    <citation type="journal article" date="2010" name="Cell">
        <title>A tissue-specific atlas of mouse protein phosphorylation and expression.</title>
        <authorList>
            <person name="Huttlin E.L."/>
            <person name="Jedrychowski M.P."/>
            <person name="Elias J.E."/>
            <person name="Goswami T."/>
            <person name="Rad R."/>
            <person name="Beausoleil S.A."/>
            <person name="Villen J."/>
            <person name="Haas W."/>
            <person name="Sowa M.E."/>
            <person name="Gygi S.P."/>
        </authorList>
    </citation>
    <scope>PHOSPHORYLATION [LARGE SCALE ANALYSIS] AT SER-35; SER-792 AND SER-796</scope>
    <scope>IDENTIFICATION BY MASS SPECTROMETRY [LARGE SCALE ANALYSIS]</scope>
    <source>
        <tissue>Brown adipose tissue</tissue>
        <tissue>Kidney</tissue>
        <tissue>Liver</tissue>
        <tissue>Lung</tissue>
    </source>
</reference>
<reference key="5">
    <citation type="journal article" date="2013" name="Eur. J. Immunol.">
        <title>The POSH/JIP-1 scaffold network regulates TCR-mediated JNK1 signals and effector function in CD8(+) T cells.</title>
        <authorList>
            <person name="Cunningham C.A."/>
            <person name="Knudson K.M."/>
            <person name="Peng B.J."/>
            <person name="Teixeiro E."/>
            <person name="Daniels M.A."/>
        </authorList>
    </citation>
    <scope>IDENTIFICATION IN A COMPLEX WITH SH3RF1; RAC1; MAPK8; MAPK8IP1 AND MAP2K7</scope>
</reference>
<evidence type="ECO:0000250" key="1"/>
<evidence type="ECO:0000250" key="2">
    <source>
        <dbReference type="UniProtKB" id="Q16584"/>
    </source>
</evidence>
<evidence type="ECO:0000250" key="3">
    <source>
        <dbReference type="UniProtKB" id="Q66HA1"/>
    </source>
</evidence>
<evidence type="ECO:0000255" key="4">
    <source>
        <dbReference type="PROSITE-ProRule" id="PRU00159"/>
    </source>
</evidence>
<evidence type="ECO:0000255" key="5">
    <source>
        <dbReference type="PROSITE-ProRule" id="PRU00192"/>
    </source>
</evidence>
<evidence type="ECO:0000255" key="6">
    <source>
        <dbReference type="PROSITE-ProRule" id="PRU10027"/>
    </source>
</evidence>
<evidence type="ECO:0000256" key="7">
    <source>
        <dbReference type="SAM" id="MobiDB-lite"/>
    </source>
</evidence>
<evidence type="ECO:0000269" key="8">
    <source>
    </source>
</evidence>
<evidence type="ECO:0000305" key="9"/>
<evidence type="ECO:0007744" key="10">
    <source>
    </source>
</evidence>
<evidence type="ECO:0007744" key="11">
    <source>
    </source>
</evidence>
<comment type="function">
    <text evidence="1">Activates the JUN N-terminal pathway. Required for serum-stimulated cell proliferation and for mitogen and cytokine activation of MAPK14 (p38), MAPK3 (ERK) and MAPK8 (JNK1) through phosphorylation and activation of MAP2K4/MKK4 and MAP2K7/MKK7. Plays a role in mitogen-stimulated phosphorylation and activation of BRAF, but does not phosphorylate BRAF directly. Influences microtubule organization during the cell cycle (By similarity).</text>
</comment>
<comment type="catalytic activity">
    <reaction>
        <text>L-seryl-[protein] + ATP = O-phospho-L-seryl-[protein] + ADP + H(+)</text>
        <dbReference type="Rhea" id="RHEA:17989"/>
        <dbReference type="Rhea" id="RHEA-COMP:9863"/>
        <dbReference type="Rhea" id="RHEA-COMP:11604"/>
        <dbReference type="ChEBI" id="CHEBI:15378"/>
        <dbReference type="ChEBI" id="CHEBI:29999"/>
        <dbReference type="ChEBI" id="CHEBI:30616"/>
        <dbReference type="ChEBI" id="CHEBI:83421"/>
        <dbReference type="ChEBI" id="CHEBI:456216"/>
        <dbReference type="EC" id="2.7.11.25"/>
    </reaction>
</comment>
<comment type="catalytic activity">
    <reaction>
        <text>L-threonyl-[protein] + ATP = O-phospho-L-threonyl-[protein] + ADP + H(+)</text>
        <dbReference type="Rhea" id="RHEA:46608"/>
        <dbReference type="Rhea" id="RHEA-COMP:11060"/>
        <dbReference type="Rhea" id="RHEA-COMP:11605"/>
        <dbReference type="ChEBI" id="CHEBI:15378"/>
        <dbReference type="ChEBI" id="CHEBI:30013"/>
        <dbReference type="ChEBI" id="CHEBI:30616"/>
        <dbReference type="ChEBI" id="CHEBI:61977"/>
        <dbReference type="ChEBI" id="CHEBI:456216"/>
        <dbReference type="EC" id="2.7.11.25"/>
    </reaction>
</comment>
<comment type="cofactor">
    <cofactor evidence="1">
        <name>Mg(2+)</name>
        <dbReference type="ChEBI" id="CHEBI:18420"/>
    </cofactor>
</comment>
<comment type="activity regulation">
    <text evidence="1">Homodimerization via the leucine zipper domains is required for autophosphorylation and subsequent activation.</text>
</comment>
<comment type="subunit">
    <text evidence="2 3 8">Homodimer; undergoes dimerization during activation. Interacts with MAP2K4/MKK4 and MAP2K7/MKK7 (By similarity). Found in a complex with SH3RF1, RAC1, MAP2K7/MKK7, MAPK8IP1/JIP1 and MAPK8/JNK1 (PubMed:23963642).</text>
</comment>
<comment type="subcellular location">
    <subcellularLocation>
        <location>Cytoplasm</location>
        <location>Cytoskeleton</location>
        <location>Microtubule organizing center</location>
        <location>Centrosome</location>
    </subcellularLocation>
    <text evidence="1">Location is cell cycle dependent.</text>
</comment>
<comment type="PTM">
    <text evidence="1">Autophosphorylation on serine and threonine residues within the activation loop plays a role in enzyme activation. Thr-278 is likely to be the main autophosphorylation site. Phosphorylation of Ser-556 and Ser-557 is induced by CDC42 (By similarity).</text>
</comment>
<comment type="similarity">
    <text evidence="9">Belongs to the protein kinase superfamily. STE Ser/Thr protein kinase family. MAP kinase kinase kinase subfamily.</text>
</comment>
<accession>Q80XI6</accession>
<accession>Q8K0M8</accession>
<accession>Q9JJ15</accession>
<proteinExistence type="evidence at protein level"/>
<name>M3K11_MOUSE</name>
<protein>
    <recommendedName>
        <fullName>Mitogen-activated protein kinase kinase kinase 11</fullName>
        <ecNumber>2.7.11.25</ecNumber>
    </recommendedName>
    <alternativeName>
        <fullName>Mixed lineage kinase 3</fullName>
    </alternativeName>
</protein>